<proteinExistence type="evidence at protein level"/>
<evidence type="ECO:0000256" key="1">
    <source>
        <dbReference type="SAM" id="MobiDB-lite"/>
    </source>
</evidence>
<evidence type="ECO:0000269" key="2">
    <source ref="2"/>
</evidence>
<evidence type="ECO:0000305" key="3"/>
<evidence type="ECO:0000312" key="4">
    <source>
        <dbReference type="EMBL" id="AAT87565.1"/>
    </source>
</evidence>
<comment type="mass spectrometry" mass="16850.15" method="Electrospray" evidence="2"/>
<protein>
    <recommendedName>
        <fullName>Uncharacterized protein Spy1430</fullName>
    </recommendedName>
</protein>
<dbReference type="EMBL" id="CP000003">
    <property type="protein sequence ID" value="AAT87565.1"/>
    <property type="molecule type" value="Genomic_DNA"/>
</dbReference>
<dbReference type="RefSeq" id="WP_011054910.1">
    <property type="nucleotide sequence ID" value="NC_006086.1"/>
</dbReference>
<dbReference type="SMR" id="Q5XAJ8"/>
<dbReference type="KEGG" id="spa:M6_Spy1430"/>
<dbReference type="HOGENOM" id="CLU_159386_0_0_9"/>
<dbReference type="Proteomes" id="UP000001167">
    <property type="component" value="Chromosome"/>
</dbReference>
<dbReference type="Gene3D" id="3.10.450.40">
    <property type="match status" value="1"/>
</dbReference>
<dbReference type="InterPro" id="IPR025711">
    <property type="entry name" value="PepSY"/>
</dbReference>
<dbReference type="Pfam" id="PF03413">
    <property type="entry name" value="PepSY"/>
    <property type="match status" value="1"/>
</dbReference>
<sequence length="130" mass="14544">MCLSYNRRNQRKKVVLMTIKKFSLLAIASLSLLSLAACDMDDKDDHMDNQPKTSQTSKKVKLSEDKAKSIALKDASVTEADAQMLSVTQDNEDGKAVYEIEFQNKDQEYSYTIDANSGDIVEKSSEPIND</sequence>
<feature type="chain" id="PRO_0000259998" description="Uncharacterized protein Spy1430">
    <location>
        <begin position="1"/>
        <end position="130"/>
    </location>
</feature>
<feature type="region of interest" description="Disordered" evidence="1">
    <location>
        <begin position="41"/>
        <end position="64"/>
    </location>
</feature>
<name>Y1430_STRP6</name>
<organism>
    <name type="scientific">Streptococcus pyogenes serotype M6 (strain ATCC BAA-946 / MGAS10394)</name>
    <dbReference type="NCBI Taxonomy" id="286636"/>
    <lineage>
        <taxon>Bacteria</taxon>
        <taxon>Bacillati</taxon>
        <taxon>Bacillota</taxon>
        <taxon>Bacilli</taxon>
        <taxon>Lactobacillales</taxon>
        <taxon>Streptococcaceae</taxon>
        <taxon>Streptococcus</taxon>
    </lineage>
</organism>
<keyword id="KW-0903">Direct protein sequencing</keyword>
<gene>
    <name type="ordered locus">M6_Spy1430</name>
</gene>
<reference evidence="4" key="1">
    <citation type="journal article" date="2004" name="J. Infect. Dis.">
        <title>Progress toward characterization of the group A Streptococcus metagenome: complete genome sequence of a macrolide-resistant serotype M6 strain.</title>
        <authorList>
            <person name="Banks D.J."/>
            <person name="Porcella S.F."/>
            <person name="Barbian K.D."/>
            <person name="Beres S.B."/>
            <person name="Philips L.E."/>
            <person name="Voyich J.M."/>
            <person name="DeLeo F.R."/>
            <person name="Martin J.M."/>
            <person name="Somerville G.A."/>
            <person name="Musser J.M."/>
        </authorList>
    </citation>
    <scope>NUCLEOTIDE SEQUENCE [LARGE SCALE GENOMIC DNA]</scope>
    <source>
        <strain>ATCC BAA-946 / MGAS10394</strain>
    </source>
</reference>
<reference evidence="3" key="2">
    <citation type="submission" date="2000-05" db="UniProtKB">
        <title>Two-dimensional gel electrophoresis map of Streptococcus pyogenes proteins.</title>
        <authorList>
            <person name="Hogan D.A."/>
            <person name="Du P."/>
            <person name="Stevenson T.I."/>
            <person name="Whitton M."/>
            <person name="Kilby G.W."/>
            <person name="Rogers J."/>
            <person name="VanBogelen R.A."/>
        </authorList>
    </citation>
    <scope>PROTEIN SEQUENCE OF 69-105</scope>
    <scope>MASS SPECTROMETRY</scope>
    <source>
        <strain evidence="2">JRS4 / Serotype M6</strain>
    </source>
</reference>
<accession>Q5XAJ8</accession>
<accession>P82579</accession>